<evidence type="ECO:0000250" key="1"/>
<evidence type="ECO:0000255" key="2">
    <source>
        <dbReference type="HAMAP-Rule" id="MF_01109"/>
    </source>
</evidence>
<keyword id="KW-0028">Amino-acid biosynthesis</keyword>
<keyword id="KW-0055">Arginine biosynthesis</keyword>
<keyword id="KW-0963">Cytoplasm</keyword>
<keyword id="KW-1185">Reference proteome</keyword>
<keyword id="KW-0808">Transferase</keyword>
<protein>
    <recommendedName>
        <fullName evidence="2">Ornithine carbamoyltransferase</fullName>
        <shortName evidence="2">OTCase</shortName>
        <ecNumber evidence="2">2.1.3.3</ecNumber>
    </recommendedName>
</protein>
<sequence>MKKDFISILDISREELANLIAHARKLKEERRVGIQTPVLAHKTLGMIFEKSSTRTRISFEAGMFELGGHALFLNPKDMQLGRGEAIRDTARVMSRFVSAIMIRANRHDEVLELAAHADIPVINGLSDREHPCQILADIMTIEERLFRTEGVKVAWIGDGNNVCTSLILSTILTGMEVIVASPSEFAPGEDVVSEALRMGAKVRIVTDPREAATGADVVMTDTWISMGQEEEIDRRRQIFMPYQVNAELMACAKPGAIVMHCLPAHRNWEITDEVLDSKASAVWDQAENRLHAQKALLVRLLA</sequence>
<feature type="chain" id="PRO_1000065099" description="Ornithine carbamoyltransferase">
    <location>
        <begin position="1"/>
        <end position="302"/>
    </location>
</feature>
<feature type="binding site" evidence="2">
    <location>
        <begin position="52"/>
        <end position="55"/>
    </location>
    <ligand>
        <name>carbamoyl phosphate</name>
        <dbReference type="ChEBI" id="CHEBI:58228"/>
    </ligand>
</feature>
<feature type="binding site" evidence="2">
    <location>
        <position position="79"/>
    </location>
    <ligand>
        <name>carbamoyl phosphate</name>
        <dbReference type="ChEBI" id="CHEBI:58228"/>
    </ligand>
</feature>
<feature type="binding site" evidence="2">
    <location>
        <position position="103"/>
    </location>
    <ligand>
        <name>carbamoyl phosphate</name>
        <dbReference type="ChEBI" id="CHEBI:58228"/>
    </ligand>
</feature>
<feature type="binding site" evidence="2">
    <location>
        <begin position="130"/>
        <end position="133"/>
    </location>
    <ligand>
        <name>carbamoyl phosphate</name>
        <dbReference type="ChEBI" id="CHEBI:58228"/>
    </ligand>
</feature>
<feature type="binding site" evidence="2">
    <location>
        <position position="161"/>
    </location>
    <ligand>
        <name>L-ornithine</name>
        <dbReference type="ChEBI" id="CHEBI:46911"/>
    </ligand>
</feature>
<feature type="binding site" evidence="2">
    <location>
        <position position="221"/>
    </location>
    <ligand>
        <name>L-ornithine</name>
        <dbReference type="ChEBI" id="CHEBI:46911"/>
    </ligand>
</feature>
<feature type="binding site" evidence="2">
    <location>
        <begin position="225"/>
        <end position="226"/>
    </location>
    <ligand>
        <name>L-ornithine</name>
        <dbReference type="ChEBI" id="CHEBI:46911"/>
    </ligand>
</feature>
<feature type="binding site" evidence="2">
    <location>
        <begin position="261"/>
        <end position="262"/>
    </location>
    <ligand>
        <name>carbamoyl phosphate</name>
        <dbReference type="ChEBI" id="CHEBI:58228"/>
    </ligand>
</feature>
<feature type="binding site" evidence="2">
    <location>
        <position position="289"/>
    </location>
    <ligand>
        <name>carbamoyl phosphate</name>
        <dbReference type="ChEBI" id="CHEBI:58228"/>
    </ligand>
</feature>
<reference key="1">
    <citation type="journal article" date="2016" name="Stand. Genomic Sci.">
        <title>Complete genome sequence of Methanospirillum hungatei type strain JF1.</title>
        <authorList>
            <person name="Gunsalus R.P."/>
            <person name="Cook L.E."/>
            <person name="Crable B."/>
            <person name="Rohlin L."/>
            <person name="McDonald E."/>
            <person name="Mouttaki H."/>
            <person name="Sieber J.R."/>
            <person name="Poweleit N."/>
            <person name="Zhou H."/>
            <person name="Lapidus A.L."/>
            <person name="Daligault H.E."/>
            <person name="Land M."/>
            <person name="Gilna P."/>
            <person name="Ivanova N."/>
            <person name="Kyrpides N."/>
            <person name="Culley D.E."/>
            <person name="McInerney M.J."/>
        </authorList>
    </citation>
    <scope>NUCLEOTIDE SEQUENCE [LARGE SCALE GENOMIC DNA]</scope>
    <source>
        <strain>ATCC 27890 / DSM 864 / NBRC 100397 / JF-1</strain>
    </source>
</reference>
<proteinExistence type="inferred from homology"/>
<accession>Q2FPP7</accession>
<comment type="function">
    <text evidence="1">Reversibly catalyzes the transfer of the carbamoyl group from carbamoyl phosphate (CP) to the N(epsilon) atom of ornithine (ORN) to produce L-citrulline.</text>
</comment>
<comment type="catalytic activity">
    <reaction evidence="2">
        <text>carbamoyl phosphate + L-ornithine = L-citrulline + phosphate + H(+)</text>
        <dbReference type="Rhea" id="RHEA:19513"/>
        <dbReference type="ChEBI" id="CHEBI:15378"/>
        <dbReference type="ChEBI" id="CHEBI:43474"/>
        <dbReference type="ChEBI" id="CHEBI:46911"/>
        <dbReference type="ChEBI" id="CHEBI:57743"/>
        <dbReference type="ChEBI" id="CHEBI:58228"/>
        <dbReference type="EC" id="2.1.3.3"/>
    </reaction>
</comment>
<comment type="pathway">
    <text evidence="2">Amino-acid biosynthesis; L-arginine biosynthesis; L-arginine from L-ornithine and carbamoyl phosphate: step 1/3.</text>
</comment>
<comment type="subcellular location">
    <subcellularLocation>
        <location evidence="2">Cytoplasm</location>
    </subcellularLocation>
</comment>
<comment type="similarity">
    <text evidence="2">Belongs to the aspartate/ornithine carbamoyltransferase superfamily. OTCase family.</text>
</comment>
<dbReference type="EC" id="2.1.3.3" evidence="2"/>
<dbReference type="EMBL" id="CP000254">
    <property type="protein sequence ID" value="ABD40862.1"/>
    <property type="molecule type" value="Genomic_DNA"/>
</dbReference>
<dbReference type="RefSeq" id="WP_011448140.1">
    <property type="nucleotide sequence ID" value="NC_007796.1"/>
</dbReference>
<dbReference type="SMR" id="Q2FPP7"/>
<dbReference type="FunCoup" id="Q2FPP7">
    <property type="interactions" value="183"/>
</dbReference>
<dbReference type="STRING" id="323259.Mhun_1113"/>
<dbReference type="EnsemblBacteria" id="ABD40862">
    <property type="protein sequence ID" value="ABD40862"/>
    <property type="gene ID" value="Mhun_1113"/>
</dbReference>
<dbReference type="GeneID" id="3922478"/>
<dbReference type="KEGG" id="mhu:Mhun_1113"/>
<dbReference type="eggNOG" id="arCOG00912">
    <property type="taxonomic scope" value="Archaea"/>
</dbReference>
<dbReference type="HOGENOM" id="CLU_043846_3_2_2"/>
<dbReference type="InParanoid" id="Q2FPP7"/>
<dbReference type="OrthoDB" id="4696at2157"/>
<dbReference type="UniPathway" id="UPA00068">
    <property type="reaction ID" value="UER00112"/>
</dbReference>
<dbReference type="Proteomes" id="UP000001941">
    <property type="component" value="Chromosome"/>
</dbReference>
<dbReference type="GO" id="GO:0005737">
    <property type="term" value="C:cytoplasm"/>
    <property type="evidence" value="ECO:0007669"/>
    <property type="project" value="UniProtKB-SubCell"/>
</dbReference>
<dbReference type="GO" id="GO:0016597">
    <property type="term" value="F:amino acid binding"/>
    <property type="evidence" value="ECO:0007669"/>
    <property type="project" value="InterPro"/>
</dbReference>
<dbReference type="GO" id="GO:0004585">
    <property type="term" value="F:ornithine carbamoyltransferase activity"/>
    <property type="evidence" value="ECO:0007669"/>
    <property type="project" value="UniProtKB-UniRule"/>
</dbReference>
<dbReference type="GO" id="GO:0042450">
    <property type="term" value="P:arginine biosynthetic process via ornithine"/>
    <property type="evidence" value="ECO:0007669"/>
    <property type="project" value="TreeGrafter"/>
</dbReference>
<dbReference type="GO" id="GO:0019240">
    <property type="term" value="P:citrulline biosynthetic process"/>
    <property type="evidence" value="ECO:0007669"/>
    <property type="project" value="TreeGrafter"/>
</dbReference>
<dbReference type="GO" id="GO:0006526">
    <property type="term" value="P:L-arginine biosynthetic process"/>
    <property type="evidence" value="ECO:0007669"/>
    <property type="project" value="UniProtKB-UniRule"/>
</dbReference>
<dbReference type="FunFam" id="3.40.50.1370:FF:000008">
    <property type="entry name" value="Ornithine carbamoyltransferase"/>
    <property type="match status" value="1"/>
</dbReference>
<dbReference type="Gene3D" id="3.40.50.1370">
    <property type="entry name" value="Aspartate/ornithine carbamoyltransferase"/>
    <property type="match status" value="2"/>
</dbReference>
<dbReference type="HAMAP" id="MF_01109">
    <property type="entry name" value="OTCase"/>
    <property type="match status" value="1"/>
</dbReference>
<dbReference type="InterPro" id="IPR006132">
    <property type="entry name" value="Asp/Orn_carbamoyltranf_P-bd"/>
</dbReference>
<dbReference type="InterPro" id="IPR006130">
    <property type="entry name" value="Asp/Orn_carbamoylTrfase"/>
</dbReference>
<dbReference type="InterPro" id="IPR036901">
    <property type="entry name" value="Asp/Orn_carbamoylTrfase_sf"/>
</dbReference>
<dbReference type="InterPro" id="IPR006131">
    <property type="entry name" value="Asp_carbamoyltransf_Asp/Orn-bd"/>
</dbReference>
<dbReference type="InterPro" id="IPR002292">
    <property type="entry name" value="Orn/put_carbamltrans"/>
</dbReference>
<dbReference type="InterPro" id="IPR024904">
    <property type="entry name" value="OTCase_ArgI"/>
</dbReference>
<dbReference type="NCBIfam" id="TIGR00658">
    <property type="entry name" value="orni_carb_tr"/>
    <property type="match status" value="1"/>
</dbReference>
<dbReference type="NCBIfam" id="NF001986">
    <property type="entry name" value="PRK00779.1"/>
    <property type="match status" value="1"/>
</dbReference>
<dbReference type="PANTHER" id="PTHR45753">
    <property type="entry name" value="ORNITHINE CARBAMOYLTRANSFERASE, MITOCHONDRIAL"/>
    <property type="match status" value="1"/>
</dbReference>
<dbReference type="PANTHER" id="PTHR45753:SF3">
    <property type="entry name" value="ORNITHINE TRANSCARBAMYLASE, MITOCHONDRIAL"/>
    <property type="match status" value="1"/>
</dbReference>
<dbReference type="Pfam" id="PF00185">
    <property type="entry name" value="OTCace"/>
    <property type="match status" value="1"/>
</dbReference>
<dbReference type="Pfam" id="PF02729">
    <property type="entry name" value="OTCace_N"/>
    <property type="match status" value="1"/>
</dbReference>
<dbReference type="PRINTS" id="PR00100">
    <property type="entry name" value="AOTCASE"/>
</dbReference>
<dbReference type="PRINTS" id="PR00102">
    <property type="entry name" value="OTCASE"/>
</dbReference>
<dbReference type="SUPFAM" id="SSF53671">
    <property type="entry name" value="Aspartate/ornithine carbamoyltransferase"/>
    <property type="match status" value="1"/>
</dbReference>
<dbReference type="PROSITE" id="PS00097">
    <property type="entry name" value="CARBAMOYLTRANSFERASE"/>
    <property type="match status" value="1"/>
</dbReference>
<gene>
    <name evidence="2" type="primary">argF</name>
    <name type="ordered locus">Mhun_1113</name>
</gene>
<name>OTC_METHJ</name>
<organism>
    <name type="scientific">Methanospirillum hungatei JF-1 (strain ATCC 27890 / DSM 864 / NBRC 100397 / JF-1)</name>
    <dbReference type="NCBI Taxonomy" id="323259"/>
    <lineage>
        <taxon>Archaea</taxon>
        <taxon>Methanobacteriati</taxon>
        <taxon>Methanobacteriota</taxon>
        <taxon>Stenosarchaea group</taxon>
        <taxon>Methanomicrobia</taxon>
        <taxon>Methanomicrobiales</taxon>
        <taxon>Methanospirillaceae</taxon>
        <taxon>Methanospirillum</taxon>
    </lineage>
</organism>